<name>NU5M_MAIZE</name>
<accession>Q36284</accession>
<gene>
    <name type="primary">ND5</name>
    <name type="synonym">NAD5</name>
</gene>
<geneLocation type="mitochondrion"/>
<comment type="function">
    <text evidence="1">Core subunit of the mitochondrial membrane respiratory chain NADH dehydrogenase (Complex I) that is believed to belong to the minimal assembly required for catalysis. Complex I functions in the transfer of electrons from NADH to the respiratory chain. The immediate electron acceptor for the enzyme is believed to be ubiquinone (By similarity).</text>
</comment>
<comment type="catalytic activity">
    <reaction>
        <text>a ubiquinone + NADH + 5 H(+)(in) = a ubiquinol + NAD(+) + 4 H(+)(out)</text>
        <dbReference type="Rhea" id="RHEA:29091"/>
        <dbReference type="Rhea" id="RHEA-COMP:9565"/>
        <dbReference type="Rhea" id="RHEA-COMP:9566"/>
        <dbReference type="ChEBI" id="CHEBI:15378"/>
        <dbReference type="ChEBI" id="CHEBI:16389"/>
        <dbReference type="ChEBI" id="CHEBI:17976"/>
        <dbReference type="ChEBI" id="CHEBI:57540"/>
        <dbReference type="ChEBI" id="CHEBI:57945"/>
        <dbReference type="EC" id="7.1.1.2"/>
    </reaction>
</comment>
<comment type="subcellular location">
    <subcellularLocation>
        <location evidence="1">Mitochondrion inner membrane</location>
        <topology evidence="1">Multi-pass membrane protein</topology>
    </subcellularLocation>
</comment>
<comment type="similarity">
    <text evidence="3">Belongs to the complex I subunit 5 family.</text>
</comment>
<proteinExistence type="inferred from homology"/>
<feature type="chain" id="PRO_0000118111" description="NADH-ubiquinone oxidoreductase chain 5">
    <location>
        <begin position="1" status="less than"/>
        <end position="180"/>
    </location>
</feature>
<feature type="transmembrane region" description="Helical" evidence="2">
    <location>
        <begin position="131"/>
        <end position="148"/>
    </location>
</feature>
<feature type="non-terminal residue">
    <location>
        <position position="1"/>
    </location>
</feature>
<dbReference type="EC" id="7.1.1.2"/>
<dbReference type="EMBL" id="M74160">
    <property type="protein sequence ID" value="AAA31953.2"/>
    <property type="molecule type" value="Genomic_DNA"/>
</dbReference>
<dbReference type="PIR" id="PQ0295">
    <property type="entry name" value="PQ0295"/>
</dbReference>
<dbReference type="SMR" id="Q36284"/>
<dbReference type="GO" id="GO:0005743">
    <property type="term" value="C:mitochondrial inner membrane"/>
    <property type="evidence" value="ECO:0007669"/>
    <property type="project" value="UniProtKB-SubCell"/>
</dbReference>
<dbReference type="GO" id="GO:0008137">
    <property type="term" value="F:NADH dehydrogenase (ubiquinone) activity"/>
    <property type="evidence" value="ECO:0007669"/>
    <property type="project" value="UniProtKB-EC"/>
</dbReference>
<dbReference type="GO" id="GO:0042773">
    <property type="term" value="P:ATP synthesis coupled electron transport"/>
    <property type="evidence" value="ECO:0007669"/>
    <property type="project" value="InterPro"/>
</dbReference>
<dbReference type="Gene3D" id="1.20.5.2700">
    <property type="match status" value="1"/>
</dbReference>
<dbReference type="InterPro" id="IPR010934">
    <property type="entry name" value="NADH_DH_su5_C"/>
</dbReference>
<dbReference type="InterPro" id="IPR003945">
    <property type="entry name" value="NU5C-like"/>
</dbReference>
<dbReference type="PANTHER" id="PTHR42829">
    <property type="entry name" value="NADH-UBIQUINONE OXIDOREDUCTASE CHAIN 5"/>
    <property type="match status" value="1"/>
</dbReference>
<dbReference type="PANTHER" id="PTHR42829:SF2">
    <property type="entry name" value="NADH-UBIQUINONE OXIDOREDUCTASE CHAIN 5"/>
    <property type="match status" value="1"/>
</dbReference>
<dbReference type="Pfam" id="PF06455">
    <property type="entry name" value="NADH5_C"/>
    <property type="match status" value="1"/>
</dbReference>
<reference key="1">
    <citation type="journal article" date="1991" name="Plant Cell">
        <title>A trans-splicing model for the expression of the tripartite nad5 gene in wheat and maize mitochondria.</title>
        <authorList>
            <person name="de Souza A.P."/>
            <person name="Jubier M.-F."/>
            <person name="Delcher E."/>
            <person name="Lancelin D."/>
            <person name="Lejeune B."/>
        </authorList>
    </citation>
    <scope>NUCLEOTIDE SEQUENCE [GENOMIC DNA]</scope>
</reference>
<evidence type="ECO:0000250" key="1"/>
<evidence type="ECO:0000255" key="2"/>
<evidence type="ECO:0000305" key="3"/>
<sequence>NFWANSPFVLPKNEILAESEFAAPTITKLIPILFSTSGASLAYNVNLVADQFQRAFQTSTFCNRLYSFFNKRWFFDQVLNDFLVRSFLRFGYSVSFEALDKGAIEILGPYGISYTFRRLAERISQLQSGSVYHYAFAMLLGSTPFVTFSRMWDSLSSWVDSRSSFILLVSSFIINKSSQE</sequence>
<protein>
    <recommendedName>
        <fullName>NADH-ubiquinone oxidoreductase chain 5</fullName>
        <ecNumber>7.1.1.2</ecNumber>
    </recommendedName>
    <alternativeName>
        <fullName>NADH dehydrogenase subunit 5</fullName>
    </alternativeName>
</protein>
<organism>
    <name type="scientific">Zea mays</name>
    <name type="common">Maize</name>
    <dbReference type="NCBI Taxonomy" id="4577"/>
    <lineage>
        <taxon>Eukaryota</taxon>
        <taxon>Viridiplantae</taxon>
        <taxon>Streptophyta</taxon>
        <taxon>Embryophyta</taxon>
        <taxon>Tracheophyta</taxon>
        <taxon>Spermatophyta</taxon>
        <taxon>Magnoliopsida</taxon>
        <taxon>Liliopsida</taxon>
        <taxon>Poales</taxon>
        <taxon>Poaceae</taxon>
        <taxon>PACMAD clade</taxon>
        <taxon>Panicoideae</taxon>
        <taxon>Andropogonodae</taxon>
        <taxon>Andropogoneae</taxon>
        <taxon>Tripsacinae</taxon>
        <taxon>Zea</taxon>
    </lineage>
</organism>
<keyword id="KW-0249">Electron transport</keyword>
<keyword id="KW-0472">Membrane</keyword>
<keyword id="KW-0496">Mitochondrion</keyword>
<keyword id="KW-0999">Mitochondrion inner membrane</keyword>
<keyword id="KW-0520">NAD</keyword>
<keyword id="KW-0679">Respiratory chain</keyword>
<keyword id="KW-1278">Translocase</keyword>
<keyword id="KW-0812">Transmembrane</keyword>
<keyword id="KW-1133">Transmembrane helix</keyword>
<keyword id="KW-0813">Transport</keyword>
<keyword id="KW-0830">Ubiquinone</keyword>